<evidence type="ECO:0000255" key="1">
    <source>
        <dbReference type="HAMAP-Rule" id="MF_00156"/>
    </source>
</evidence>
<feature type="chain" id="PRO_1000096940" description="3-methyl-2-oxobutanoate hydroxymethyltransferase">
    <location>
        <begin position="1"/>
        <end position="269"/>
    </location>
</feature>
<feature type="active site" description="Proton acceptor" evidence="1">
    <location>
        <position position="187"/>
    </location>
</feature>
<feature type="binding site" evidence="1">
    <location>
        <begin position="50"/>
        <end position="51"/>
    </location>
    <ligand>
        <name>3-methyl-2-oxobutanoate</name>
        <dbReference type="ChEBI" id="CHEBI:11851"/>
    </ligand>
</feature>
<feature type="binding site" evidence="1">
    <location>
        <position position="50"/>
    </location>
    <ligand>
        <name>Mg(2+)</name>
        <dbReference type="ChEBI" id="CHEBI:18420"/>
    </ligand>
</feature>
<feature type="binding site" evidence="1">
    <location>
        <position position="89"/>
    </location>
    <ligand>
        <name>3-methyl-2-oxobutanoate</name>
        <dbReference type="ChEBI" id="CHEBI:11851"/>
    </ligand>
</feature>
<feature type="binding site" evidence="1">
    <location>
        <position position="89"/>
    </location>
    <ligand>
        <name>Mg(2+)</name>
        <dbReference type="ChEBI" id="CHEBI:18420"/>
    </ligand>
</feature>
<feature type="binding site" evidence="1">
    <location>
        <position position="118"/>
    </location>
    <ligand>
        <name>3-methyl-2-oxobutanoate</name>
        <dbReference type="ChEBI" id="CHEBI:11851"/>
    </ligand>
</feature>
<feature type="binding site" evidence="1">
    <location>
        <position position="120"/>
    </location>
    <ligand>
        <name>Mg(2+)</name>
        <dbReference type="ChEBI" id="CHEBI:18420"/>
    </ligand>
</feature>
<protein>
    <recommendedName>
        <fullName evidence="1">3-methyl-2-oxobutanoate hydroxymethyltransferase</fullName>
        <ecNumber evidence="1">2.1.2.11</ecNumber>
    </recommendedName>
    <alternativeName>
        <fullName evidence="1">Ketopantoate hydroxymethyltransferase</fullName>
        <shortName evidence="1">KPHMT</shortName>
    </alternativeName>
</protein>
<organism>
    <name type="scientific">Aliarcobacter butzleri (strain RM4018)</name>
    <name type="common">Arcobacter butzleri</name>
    <dbReference type="NCBI Taxonomy" id="367737"/>
    <lineage>
        <taxon>Bacteria</taxon>
        <taxon>Pseudomonadati</taxon>
        <taxon>Campylobacterota</taxon>
        <taxon>Epsilonproteobacteria</taxon>
        <taxon>Campylobacterales</taxon>
        <taxon>Arcobacteraceae</taxon>
        <taxon>Aliarcobacter</taxon>
    </lineage>
</organism>
<sequence>MSIIKNNFEKMNITKIKNSKNNKKLTVITAYDALFAKLFEEIADMILVGDSLNMSFAGRPDTLSATLEQMIYHTNAVCNGAKNAFVIIDMPFGTYINKDEALKNCVEVYRQTNANAVKIEGGEDKADIIKHLTSNAVAVMGHIGLMPQYVRSEGGYKVRGKTKEDEEQLIRDAIAVEKAGAFSIVVEGVKSDVAKKITQAVNIPIIGIGAGVDTDGQVLVWSDMLGFFEEFKPKFVRHYLDGAELVKEAVNQYRNDVQDKSFPSKEEEY</sequence>
<gene>
    <name evidence="1" type="primary">panB</name>
    <name type="ordered locus">Abu_1775</name>
</gene>
<keyword id="KW-0963">Cytoplasm</keyword>
<keyword id="KW-0460">Magnesium</keyword>
<keyword id="KW-0479">Metal-binding</keyword>
<keyword id="KW-0566">Pantothenate biosynthesis</keyword>
<keyword id="KW-1185">Reference proteome</keyword>
<keyword id="KW-0808">Transferase</keyword>
<proteinExistence type="inferred from homology"/>
<accession>A8EVP8</accession>
<reference key="1">
    <citation type="journal article" date="2007" name="PLoS ONE">
        <title>The complete genome sequence and analysis of the Epsilonproteobacterium Arcobacter butzleri.</title>
        <authorList>
            <person name="Miller W.G."/>
            <person name="Parker C.T."/>
            <person name="Rubenfield M."/>
            <person name="Mendz G.L."/>
            <person name="Woesten M.M.S.M."/>
            <person name="Ussery D.W."/>
            <person name="Stolz J.F."/>
            <person name="Binnewies T.T."/>
            <person name="Hallin P.F."/>
            <person name="Wang G."/>
            <person name="Malek J.A."/>
            <person name="Rogosin A."/>
            <person name="Stanker L.H."/>
            <person name="Mandrell R.E."/>
        </authorList>
    </citation>
    <scope>NUCLEOTIDE SEQUENCE [LARGE SCALE GENOMIC DNA]</scope>
    <source>
        <strain>RM4018</strain>
    </source>
</reference>
<comment type="function">
    <text evidence="1">Catalyzes the reversible reaction in which hydroxymethyl group from 5,10-methylenetetrahydrofolate is transferred onto alpha-ketoisovalerate to form ketopantoate.</text>
</comment>
<comment type="catalytic activity">
    <reaction evidence="1">
        <text>3-methyl-2-oxobutanoate + (6R)-5,10-methylene-5,6,7,8-tetrahydrofolate + H2O = 2-dehydropantoate + (6S)-5,6,7,8-tetrahydrofolate</text>
        <dbReference type="Rhea" id="RHEA:11824"/>
        <dbReference type="ChEBI" id="CHEBI:11561"/>
        <dbReference type="ChEBI" id="CHEBI:11851"/>
        <dbReference type="ChEBI" id="CHEBI:15377"/>
        <dbReference type="ChEBI" id="CHEBI:15636"/>
        <dbReference type="ChEBI" id="CHEBI:57453"/>
        <dbReference type="EC" id="2.1.2.11"/>
    </reaction>
</comment>
<comment type="cofactor">
    <cofactor evidence="1">
        <name>Mg(2+)</name>
        <dbReference type="ChEBI" id="CHEBI:18420"/>
    </cofactor>
    <text evidence="1">Binds 1 Mg(2+) ion per subunit.</text>
</comment>
<comment type="pathway">
    <text evidence="1">Cofactor biosynthesis; (R)-pantothenate biosynthesis; (R)-pantoate from 3-methyl-2-oxobutanoate: step 1/2.</text>
</comment>
<comment type="subunit">
    <text evidence="1">Homodecamer; pentamer of dimers.</text>
</comment>
<comment type="subcellular location">
    <subcellularLocation>
        <location evidence="1">Cytoplasm</location>
    </subcellularLocation>
</comment>
<comment type="similarity">
    <text evidence="1">Belongs to the PanB family.</text>
</comment>
<dbReference type="EC" id="2.1.2.11" evidence="1"/>
<dbReference type="EMBL" id="CP000361">
    <property type="protein sequence ID" value="ABV68021.1"/>
    <property type="molecule type" value="Genomic_DNA"/>
</dbReference>
<dbReference type="RefSeq" id="WP_012147740.1">
    <property type="nucleotide sequence ID" value="NC_009850.1"/>
</dbReference>
<dbReference type="SMR" id="A8EVP8"/>
<dbReference type="STRING" id="367737.Abu_1775"/>
<dbReference type="GeneID" id="24303368"/>
<dbReference type="KEGG" id="abu:Abu_1775"/>
<dbReference type="eggNOG" id="COG0413">
    <property type="taxonomic scope" value="Bacteria"/>
</dbReference>
<dbReference type="HOGENOM" id="CLU_036645_1_0_7"/>
<dbReference type="UniPathway" id="UPA00028">
    <property type="reaction ID" value="UER00003"/>
</dbReference>
<dbReference type="Proteomes" id="UP000001136">
    <property type="component" value="Chromosome"/>
</dbReference>
<dbReference type="GO" id="GO:0005737">
    <property type="term" value="C:cytoplasm"/>
    <property type="evidence" value="ECO:0007669"/>
    <property type="project" value="UniProtKB-SubCell"/>
</dbReference>
<dbReference type="GO" id="GO:0003864">
    <property type="term" value="F:3-methyl-2-oxobutanoate hydroxymethyltransferase activity"/>
    <property type="evidence" value="ECO:0007669"/>
    <property type="project" value="UniProtKB-UniRule"/>
</dbReference>
<dbReference type="GO" id="GO:0000287">
    <property type="term" value="F:magnesium ion binding"/>
    <property type="evidence" value="ECO:0007669"/>
    <property type="project" value="TreeGrafter"/>
</dbReference>
<dbReference type="GO" id="GO:0015940">
    <property type="term" value="P:pantothenate biosynthetic process"/>
    <property type="evidence" value="ECO:0007669"/>
    <property type="project" value="UniProtKB-UniRule"/>
</dbReference>
<dbReference type="CDD" id="cd06557">
    <property type="entry name" value="KPHMT-like"/>
    <property type="match status" value="1"/>
</dbReference>
<dbReference type="FunFam" id="3.20.20.60:FF:000003">
    <property type="entry name" value="3-methyl-2-oxobutanoate hydroxymethyltransferase"/>
    <property type="match status" value="1"/>
</dbReference>
<dbReference type="Gene3D" id="3.20.20.60">
    <property type="entry name" value="Phosphoenolpyruvate-binding domains"/>
    <property type="match status" value="1"/>
</dbReference>
<dbReference type="HAMAP" id="MF_00156">
    <property type="entry name" value="PanB"/>
    <property type="match status" value="1"/>
</dbReference>
<dbReference type="InterPro" id="IPR003700">
    <property type="entry name" value="Pantoate_hydroxy_MeTrfase"/>
</dbReference>
<dbReference type="InterPro" id="IPR015813">
    <property type="entry name" value="Pyrv/PenolPyrv_kinase-like_dom"/>
</dbReference>
<dbReference type="InterPro" id="IPR040442">
    <property type="entry name" value="Pyrv_kinase-like_dom_sf"/>
</dbReference>
<dbReference type="NCBIfam" id="TIGR00222">
    <property type="entry name" value="panB"/>
    <property type="match status" value="1"/>
</dbReference>
<dbReference type="NCBIfam" id="NF001452">
    <property type="entry name" value="PRK00311.1"/>
    <property type="match status" value="1"/>
</dbReference>
<dbReference type="PANTHER" id="PTHR20881">
    <property type="entry name" value="3-METHYL-2-OXOBUTANOATE HYDROXYMETHYLTRANSFERASE"/>
    <property type="match status" value="1"/>
</dbReference>
<dbReference type="PANTHER" id="PTHR20881:SF0">
    <property type="entry name" value="3-METHYL-2-OXOBUTANOATE HYDROXYMETHYLTRANSFERASE"/>
    <property type="match status" value="1"/>
</dbReference>
<dbReference type="Pfam" id="PF02548">
    <property type="entry name" value="Pantoate_transf"/>
    <property type="match status" value="1"/>
</dbReference>
<dbReference type="PIRSF" id="PIRSF000388">
    <property type="entry name" value="Pantoate_hydroxy_MeTrfase"/>
    <property type="match status" value="1"/>
</dbReference>
<dbReference type="SUPFAM" id="SSF51621">
    <property type="entry name" value="Phosphoenolpyruvate/pyruvate domain"/>
    <property type="match status" value="1"/>
</dbReference>
<name>PANB_ALIB4</name>